<organism>
    <name type="scientific">Mycoplasma genitalium (strain ATCC 33530 / DSM 19775 / NCTC 10195 / G37)</name>
    <name type="common">Mycoplasmoides genitalium</name>
    <dbReference type="NCBI Taxonomy" id="243273"/>
    <lineage>
        <taxon>Bacteria</taxon>
        <taxon>Bacillati</taxon>
        <taxon>Mycoplasmatota</taxon>
        <taxon>Mycoplasmoidales</taxon>
        <taxon>Mycoplasmoidaceae</taxon>
        <taxon>Mycoplasmoides</taxon>
    </lineage>
</organism>
<protein>
    <recommendedName>
        <fullName>Peptide chain release factor 1</fullName>
        <shortName>RF-1</shortName>
    </recommendedName>
</protein>
<gene>
    <name type="primary">prfA</name>
    <name type="ordered locus">MG258</name>
</gene>
<dbReference type="EMBL" id="L43967">
    <property type="protein sequence ID" value="AAC71478.1"/>
    <property type="molecule type" value="Genomic_DNA"/>
</dbReference>
<dbReference type="EMBL" id="U01800">
    <property type="protein sequence ID" value="AAD12326.1"/>
    <property type="molecule type" value="Genomic_DNA"/>
</dbReference>
<dbReference type="PIR" id="E64228">
    <property type="entry name" value="E64228"/>
</dbReference>
<dbReference type="RefSeq" id="WP_009885793.1">
    <property type="nucleotide sequence ID" value="NC_000908.2"/>
</dbReference>
<dbReference type="SMR" id="P47500"/>
<dbReference type="FunCoup" id="P47500">
    <property type="interactions" value="184"/>
</dbReference>
<dbReference type="STRING" id="243273.MG_258"/>
<dbReference type="GeneID" id="88282407"/>
<dbReference type="KEGG" id="mge:MG_258"/>
<dbReference type="eggNOG" id="COG0216">
    <property type="taxonomic scope" value="Bacteria"/>
</dbReference>
<dbReference type="HOGENOM" id="CLU_036856_0_1_14"/>
<dbReference type="InParanoid" id="P47500"/>
<dbReference type="OrthoDB" id="9806673at2"/>
<dbReference type="BioCyc" id="MGEN243273:G1GJ2-308-MONOMER"/>
<dbReference type="Proteomes" id="UP000000807">
    <property type="component" value="Chromosome"/>
</dbReference>
<dbReference type="GO" id="GO:0005737">
    <property type="term" value="C:cytoplasm"/>
    <property type="evidence" value="ECO:0007669"/>
    <property type="project" value="UniProtKB-SubCell"/>
</dbReference>
<dbReference type="GO" id="GO:0016149">
    <property type="term" value="F:translation release factor activity, codon specific"/>
    <property type="evidence" value="ECO:0007669"/>
    <property type="project" value="UniProtKB-UniRule"/>
</dbReference>
<dbReference type="FunFam" id="3.30.160.20:FF:000004">
    <property type="entry name" value="Peptide chain release factor 1"/>
    <property type="match status" value="1"/>
</dbReference>
<dbReference type="FunFam" id="3.30.70.1660:FF:000004">
    <property type="entry name" value="Peptide chain release factor 1"/>
    <property type="match status" value="1"/>
</dbReference>
<dbReference type="Gene3D" id="3.30.160.20">
    <property type="match status" value="1"/>
</dbReference>
<dbReference type="Gene3D" id="3.30.70.1660">
    <property type="match status" value="1"/>
</dbReference>
<dbReference type="Gene3D" id="6.10.140.1950">
    <property type="match status" value="1"/>
</dbReference>
<dbReference type="HAMAP" id="MF_00093">
    <property type="entry name" value="Rel_fac_1"/>
    <property type="match status" value="1"/>
</dbReference>
<dbReference type="InterPro" id="IPR005139">
    <property type="entry name" value="PCRF"/>
</dbReference>
<dbReference type="InterPro" id="IPR000352">
    <property type="entry name" value="Pep_chain_release_fac_I"/>
</dbReference>
<dbReference type="InterPro" id="IPR045853">
    <property type="entry name" value="Pep_chain_release_fac_I_sf"/>
</dbReference>
<dbReference type="InterPro" id="IPR050057">
    <property type="entry name" value="Prokaryotic/Mito_RF"/>
</dbReference>
<dbReference type="InterPro" id="IPR004373">
    <property type="entry name" value="RF-1"/>
</dbReference>
<dbReference type="NCBIfam" id="TIGR00019">
    <property type="entry name" value="prfA"/>
    <property type="match status" value="1"/>
</dbReference>
<dbReference type="NCBIfam" id="NF001859">
    <property type="entry name" value="PRK00591.1"/>
    <property type="match status" value="1"/>
</dbReference>
<dbReference type="PANTHER" id="PTHR43804">
    <property type="entry name" value="LD18447P"/>
    <property type="match status" value="1"/>
</dbReference>
<dbReference type="PANTHER" id="PTHR43804:SF7">
    <property type="entry name" value="LD18447P"/>
    <property type="match status" value="1"/>
</dbReference>
<dbReference type="Pfam" id="PF03462">
    <property type="entry name" value="PCRF"/>
    <property type="match status" value="1"/>
</dbReference>
<dbReference type="Pfam" id="PF00472">
    <property type="entry name" value="RF-1"/>
    <property type="match status" value="1"/>
</dbReference>
<dbReference type="SMART" id="SM00937">
    <property type="entry name" value="PCRF"/>
    <property type="match status" value="1"/>
</dbReference>
<dbReference type="SUPFAM" id="SSF75620">
    <property type="entry name" value="Release factor"/>
    <property type="match status" value="1"/>
</dbReference>
<dbReference type="PROSITE" id="PS00745">
    <property type="entry name" value="RF_PROK_I"/>
    <property type="match status" value="1"/>
</dbReference>
<reference key="1">
    <citation type="journal article" date="1995" name="Science">
        <title>The minimal gene complement of Mycoplasma genitalium.</title>
        <authorList>
            <person name="Fraser C.M."/>
            <person name="Gocayne J.D."/>
            <person name="White O."/>
            <person name="Adams M.D."/>
            <person name="Clayton R.A."/>
            <person name="Fleischmann R.D."/>
            <person name="Bult C.J."/>
            <person name="Kerlavage A.R."/>
            <person name="Sutton G.G."/>
            <person name="Kelley J.M."/>
            <person name="Fritchman J.L."/>
            <person name="Weidman J.F."/>
            <person name="Small K.V."/>
            <person name="Sandusky M."/>
            <person name="Fuhrmann J.L."/>
            <person name="Nguyen D.T."/>
            <person name="Utterback T.R."/>
            <person name="Saudek D.M."/>
            <person name="Phillips C.A."/>
            <person name="Merrick J.M."/>
            <person name="Tomb J.-F."/>
            <person name="Dougherty B.A."/>
            <person name="Bott K.F."/>
            <person name="Hu P.-C."/>
            <person name="Lucier T.S."/>
            <person name="Peterson S.N."/>
            <person name="Smith H.O."/>
            <person name="Hutchison C.A. III"/>
            <person name="Venter J.C."/>
        </authorList>
    </citation>
    <scope>NUCLEOTIDE SEQUENCE [LARGE SCALE GENOMIC DNA]</scope>
    <source>
        <strain>ATCC 33530 / DSM 19775 / NCTC 10195 / G37</strain>
    </source>
</reference>
<reference key="2">
    <citation type="journal article" date="1993" name="J. Bacteriol.">
        <title>A survey of the Mycoplasma genitalium genome by using random sequencing.</title>
        <authorList>
            <person name="Peterson S.N."/>
            <person name="Hu P.-C."/>
            <person name="Bott K.F."/>
            <person name="Hutchison C.A. III"/>
        </authorList>
    </citation>
    <scope>NUCLEOTIDE SEQUENCE [GENOMIC DNA] OF 241-353</scope>
    <source>
        <strain>ATCC 33530 / DSM 19775 / NCTC 10195 / G37</strain>
    </source>
</reference>
<proteinExistence type="inferred from homology"/>
<evidence type="ECO:0000250" key="1"/>
<evidence type="ECO:0000305" key="2"/>
<comment type="function">
    <text evidence="1">Peptide chain release factor 1 directs the termination of translation in response to the peptide chain termination codons UAG and UAA.</text>
</comment>
<comment type="subcellular location">
    <subcellularLocation>
        <location evidence="1">Cytoplasm</location>
    </subcellularLocation>
</comment>
<comment type="PTM">
    <text evidence="1">Methylated by PrmC. Methylation increases the termination efficiency of RF1 (By similarity).</text>
</comment>
<comment type="similarity">
    <text evidence="2">Belongs to the prokaryotic/mitochondrial release factor family.</text>
</comment>
<keyword id="KW-0963">Cytoplasm</keyword>
<keyword id="KW-0488">Methylation</keyword>
<keyword id="KW-0648">Protein biosynthesis</keyword>
<keyword id="KW-1185">Reference proteome</keyword>
<feature type="chain" id="PRO_0000177702" description="Peptide chain release factor 1">
    <location>
        <begin position="1"/>
        <end position="359"/>
    </location>
</feature>
<feature type="modified residue" description="N5-methylglutamine" evidence="1">
    <location>
        <position position="236"/>
    </location>
</feature>
<feature type="sequence conflict" description="In Ref. 2." evidence="2" ref="2">
    <original>KKQQ</original>
    <variation>RTQL</variation>
    <location>
        <begin position="350"/>
        <end position="353"/>
    </location>
</feature>
<accession>P47500</accession>
<accession>Q49455</accession>
<name>RF1_MYCGE</name>
<sequence>MDFDKQLFFNVEKIVELTEQLEKDLNKPNLSFEQIKVINKELKHKQPLIVKFKELQKLVENANEAEQILNNSSLKELHEEAKKELEKIKASLPSLEEEIKFLLLPVDENNQKNVIVEIRPAAGGDESCIFLSDLFNMYKNYCTSKNWTVELNEIIPASVGINFVSFAVNGTDVFAKLKFESGVHRVQRVPLTEAKGRVHTSTVTVAVLPQLEEVEITINPSDLRIDTYRASGAGGQHVNRTESAVRITHLPTGIVVACQEGKSQFSNRDKAMKMLRAKLWENAQNKQLSTQADLRKSQVGSGERAEKIRTYNYPQNRITDHRIKLTINKLNTVILGDLDEIIEALQADEKKQQLEKFIS</sequence>